<keyword id="KW-0687">Ribonucleoprotein</keyword>
<keyword id="KW-0689">Ribosomal protein</keyword>
<sequence length="59" mass="6312">MAQIKITLTKSPIGRKPEQRKTVVALGLGKLNSSVVKEDNAAIRGMVNAISHLVTVEEA</sequence>
<proteinExistence type="inferred from homology"/>
<organism>
    <name type="scientific">Streptococcus agalactiae serotype Ia (strain ATCC 27591 / A909 / CDC SS700)</name>
    <dbReference type="NCBI Taxonomy" id="205921"/>
    <lineage>
        <taxon>Bacteria</taxon>
        <taxon>Bacillati</taxon>
        <taxon>Bacillota</taxon>
        <taxon>Bacilli</taxon>
        <taxon>Lactobacillales</taxon>
        <taxon>Streptococcaceae</taxon>
        <taxon>Streptococcus</taxon>
    </lineage>
</organism>
<reference key="1">
    <citation type="journal article" date="2005" name="Proc. Natl. Acad. Sci. U.S.A.">
        <title>Genome analysis of multiple pathogenic isolates of Streptococcus agalactiae: implications for the microbial 'pan-genome'.</title>
        <authorList>
            <person name="Tettelin H."/>
            <person name="Masignani V."/>
            <person name="Cieslewicz M.J."/>
            <person name="Donati C."/>
            <person name="Medini D."/>
            <person name="Ward N.L."/>
            <person name="Angiuoli S.V."/>
            <person name="Crabtree J."/>
            <person name="Jones A.L."/>
            <person name="Durkin A.S."/>
            <person name="DeBoy R.T."/>
            <person name="Davidsen T.M."/>
            <person name="Mora M."/>
            <person name="Scarselli M."/>
            <person name="Margarit y Ros I."/>
            <person name="Peterson J.D."/>
            <person name="Hauser C.R."/>
            <person name="Sundaram J.P."/>
            <person name="Nelson W.C."/>
            <person name="Madupu R."/>
            <person name="Brinkac L.M."/>
            <person name="Dodson R.J."/>
            <person name="Rosovitz M.J."/>
            <person name="Sullivan S.A."/>
            <person name="Daugherty S.C."/>
            <person name="Haft D.H."/>
            <person name="Selengut J."/>
            <person name="Gwinn M.L."/>
            <person name="Zhou L."/>
            <person name="Zafar N."/>
            <person name="Khouri H."/>
            <person name="Radune D."/>
            <person name="Dimitrov G."/>
            <person name="Watkins K."/>
            <person name="O'Connor K.J."/>
            <person name="Smith S."/>
            <person name="Utterback T.R."/>
            <person name="White O."/>
            <person name="Rubens C.E."/>
            <person name="Grandi G."/>
            <person name="Madoff L.C."/>
            <person name="Kasper D.L."/>
            <person name="Telford J.L."/>
            <person name="Wessels M.R."/>
            <person name="Rappuoli R."/>
            <person name="Fraser C.M."/>
        </authorList>
    </citation>
    <scope>NUCLEOTIDE SEQUENCE [LARGE SCALE GENOMIC DNA]</scope>
    <source>
        <strain>ATCC 27591 / A909 / CDC SS700</strain>
    </source>
</reference>
<evidence type="ECO:0000255" key="1">
    <source>
        <dbReference type="HAMAP-Rule" id="MF_01371"/>
    </source>
</evidence>
<evidence type="ECO:0000305" key="2"/>
<accession>Q3K3V1</accession>
<comment type="subunit">
    <text evidence="1">Part of the 50S ribosomal subunit.</text>
</comment>
<comment type="similarity">
    <text evidence="1">Belongs to the universal ribosomal protein uL30 family.</text>
</comment>
<name>RL30_STRA1</name>
<dbReference type="EMBL" id="CP000114">
    <property type="protein sequence ID" value="ABA45739.1"/>
    <property type="molecule type" value="Genomic_DNA"/>
</dbReference>
<dbReference type="RefSeq" id="WP_000057245.1">
    <property type="nucleotide sequence ID" value="NC_007432.1"/>
</dbReference>
<dbReference type="SMR" id="Q3K3V1"/>
<dbReference type="GeneID" id="66885036"/>
<dbReference type="KEGG" id="sak:SAK_0109"/>
<dbReference type="HOGENOM" id="CLU_131047_2_1_9"/>
<dbReference type="GO" id="GO:0022625">
    <property type="term" value="C:cytosolic large ribosomal subunit"/>
    <property type="evidence" value="ECO:0007669"/>
    <property type="project" value="TreeGrafter"/>
</dbReference>
<dbReference type="GO" id="GO:0003735">
    <property type="term" value="F:structural constituent of ribosome"/>
    <property type="evidence" value="ECO:0007669"/>
    <property type="project" value="InterPro"/>
</dbReference>
<dbReference type="GO" id="GO:0006412">
    <property type="term" value="P:translation"/>
    <property type="evidence" value="ECO:0007669"/>
    <property type="project" value="UniProtKB-UniRule"/>
</dbReference>
<dbReference type="CDD" id="cd01658">
    <property type="entry name" value="Ribosomal_L30"/>
    <property type="match status" value="1"/>
</dbReference>
<dbReference type="FunFam" id="3.30.1390.20:FF:000001">
    <property type="entry name" value="50S ribosomal protein L30"/>
    <property type="match status" value="1"/>
</dbReference>
<dbReference type="Gene3D" id="3.30.1390.20">
    <property type="entry name" value="Ribosomal protein L30, ferredoxin-like fold domain"/>
    <property type="match status" value="1"/>
</dbReference>
<dbReference type="HAMAP" id="MF_01371_B">
    <property type="entry name" value="Ribosomal_uL30_B"/>
    <property type="match status" value="1"/>
</dbReference>
<dbReference type="InterPro" id="IPR036919">
    <property type="entry name" value="Ribo_uL30_ferredoxin-like_sf"/>
</dbReference>
<dbReference type="InterPro" id="IPR005996">
    <property type="entry name" value="Ribosomal_uL30_bac-type"/>
</dbReference>
<dbReference type="InterPro" id="IPR018038">
    <property type="entry name" value="Ribosomal_uL30_CS"/>
</dbReference>
<dbReference type="InterPro" id="IPR016082">
    <property type="entry name" value="Ribosomal_uL30_ferredoxin-like"/>
</dbReference>
<dbReference type="NCBIfam" id="TIGR01308">
    <property type="entry name" value="rpmD_bact"/>
    <property type="match status" value="1"/>
</dbReference>
<dbReference type="PANTHER" id="PTHR15892:SF2">
    <property type="entry name" value="LARGE RIBOSOMAL SUBUNIT PROTEIN UL30M"/>
    <property type="match status" value="1"/>
</dbReference>
<dbReference type="PANTHER" id="PTHR15892">
    <property type="entry name" value="MITOCHONDRIAL RIBOSOMAL PROTEIN L30"/>
    <property type="match status" value="1"/>
</dbReference>
<dbReference type="Pfam" id="PF00327">
    <property type="entry name" value="Ribosomal_L30"/>
    <property type="match status" value="1"/>
</dbReference>
<dbReference type="PIRSF" id="PIRSF002211">
    <property type="entry name" value="Ribosomal_L30_bac-type"/>
    <property type="match status" value="1"/>
</dbReference>
<dbReference type="SUPFAM" id="SSF55129">
    <property type="entry name" value="Ribosomal protein L30p/L7e"/>
    <property type="match status" value="1"/>
</dbReference>
<dbReference type="PROSITE" id="PS00634">
    <property type="entry name" value="RIBOSOMAL_L30"/>
    <property type="match status" value="1"/>
</dbReference>
<gene>
    <name evidence="1" type="primary">rpmD</name>
    <name type="ordered locus">SAK_0109</name>
</gene>
<protein>
    <recommendedName>
        <fullName evidence="1">Large ribosomal subunit protein uL30</fullName>
    </recommendedName>
    <alternativeName>
        <fullName evidence="2">50S ribosomal protein L30</fullName>
    </alternativeName>
</protein>
<feature type="chain" id="PRO_0000273862" description="Large ribosomal subunit protein uL30">
    <location>
        <begin position="1"/>
        <end position="59"/>
    </location>
</feature>